<organism>
    <name type="scientific">Rattus norvegicus</name>
    <name type="common">Rat</name>
    <dbReference type="NCBI Taxonomy" id="10116"/>
    <lineage>
        <taxon>Eukaryota</taxon>
        <taxon>Metazoa</taxon>
        <taxon>Chordata</taxon>
        <taxon>Craniata</taxon>
        <taxon>Vertebrata</taxon>
        <taxon>Euteleostomi</taxon>
        <taxon>Mammalia</taxon>
        <taxon>Eutheria</taxon>
        <taxon>Euarchontoglires</taxon>
        <taxon>Glires</taxon>
        <taxon>Rodentia</taxon>
        <taxon>Myomorpha</taxon>
        <taxon>Muroidea</taxon>
        <taxon>Muridae</taxon>
        <taxon>Murinae</taxon>
        <taxon>Rattus</taxon>
    </lineage>
</organism>
<reference key="1">
    <citation type="journal article" date="1988" name="Development">
        <title>The expression of rat homeobox-containing genes is developmentally regulated and tissue specific.</title>
        <authorList>
            <person name="Falzon M."/>
            <person name="Chung S.Y."/>
        </authorList>
    </citation>
    <scope>NUCLEOTIDE SEQUENCE [GENOMIC DNA]</scope>
    <source>
        <strain>Sprague-Dawley</strain>
    </source>
</reference>
<evidence type="ECO:0000250" key="1">
    <source>
        <dbReference type="UniProtKB" id="P17481"/>
    </source>
</evidence>
<evidence type="ECO:0000255" key="2">
    <source>
        <dbReference type="PROSITE-ProRule" id="PRU00108"/>
    </source>
</evidence>
<evidence type="ECO:0000256" key="3">
    <source>
        <dbReference type="SAM" id="MobiDB-lite"/>
    </source>
</evidence>
<evidence type="ECO:0000305" key="4"/>
<feature type="chain" id="PRO_0000200151" description="Homeobox protein Hox-B8">
    <location>
        <begin position="1" status="less than"/>
        <end position="92" status="greater than"/>
    </location>
</feature>
<feature type="DNA-binding region" description="Homeobox" evidence="2">
    <location>
        <begin position="11"/>
        <end position="70"/>
    </location>
</feature>
<feature type="region of interest" description="Disordered" evidence="3">
    <location>
        <begin position="68"/>
        <end position="92"/>
    </location>
</feature>
<feature type="non-terminal residue">
    <location>
        <position position="1"/>
    </location>
</feature>
<feature type="non-terminal residue">
    <location>
        <position position="92"/>
    </location>
</feature>
<name>HXB8_RAT</name>
<dbReference type="EMBL" id="M37565">
    <property type="protein sequence ID" value="AAA41341.1"/>
    <property type="status" value="ALT_SEQ"/>
    <property type="molecule type" value="Genomic_DNA"/>
</dbReference>
<dbReference type="PIR" id="A43559">
    <property type="entry name" value="A43559"/>
</dbReference>
<dbReference type="SMR" id="P18863"/>
<dbReference type="FunCoup" id="P18863">
    <property type="interactions" value="139"/>
</dbReference>
<dbReference type="STRING" id="10116.ENSRNOP00000009986"/>
<dbReference type="PhosphoSitePlus" id="P18863"/>
<dbReference type="PaxDb" id="10116-ENSRNOP00000009986"/>
<dbReference type="UCSC" id="RGD:1586211">
    <property type="organism name" value="rat"/>
</dbReference>
<dbReference type="AGR" id="RGD:1586211"/>
<dbReference type="RGD" id="1586211">
    <property type="gene designation" value="Hoxb8"/>
</dbReference>
<dbReference type="eggNOG" id="KOG0489">
    <property type="taxonomic scope" value="Eukaryota"/>
</dbReference>
<dbReference type="InParanoid" id="P18863"/>
<dbReference type="PhylomeDB" id="P18863"/>
<dbReference type="Proteomes" id="UP000002494">
    <property type="component" value="Unplaced"/>
</dbReference>
<dbReference type="GO" id="GO:0005634">
    <property type="term" value="C:nucleus"/>
    <property type="evidence" value="ECO:0007669"/>
    <property type="project" value="UniProtKB-SubCell"/>
</dbReference>
<dbReference type="GO" id="GO:0001227">
    <property type="term" value="F:DNA-binding transcription repressor activity, RNA polymerase II-specific"/>
    <property type="evidence" value="ECO:0000266"/>
    <property type="project" value="RGD"/>
</dbReference>
<dbReference type="GO" id="GO:0043565">
    <property type="term" value="F:sequence-specific DNA binding"/>
    <property type="evidence" value="ECO:0000266"/>
    <property type="project" value="RGD"/>
</dbReference>
<dbReference type="GO" id="GO:1990837">
    <property type="term" value="F:sequence-specific double-stranded DNA binding"/>
    <property type="evidence" value="ECO:0000266"/>
    <property type="project" value="RGD"/>
</dbReference>
<dbReference type="GO" id="GO:0008344">
    <property type="term" value="P:adult locomotory behavior"/>
    <property type="evidence" value="ECO:0000266"/>
    <property type="project" value="RGD"/>
</dbReference>
<dbReference type="GO" id="GO:0009952">
    <property type="term" value="P:anterior/posterior pattern specification"/>
    <property type="evidence" value="ECO:0000266"/>
    <property type="project" value="RGD"/>
</dbReference>
<dbReference type="GO" id="GO:0021516">
    <property type="term" value="P:dorsal spinal cord development"/>
    <property type="evidence" value="ECO:0000266"/>
    <property type="project" value="RGD"/>
</dbReference>
<dbReference type="GO" id="GO:0048704">
    <property type="term" value="P:embryonic skeletal system morphogenesis"/>
    <property type="evidence" value="ECO:0000266"/>
    <property type="project" value="RGD"/>
</dbReference>
<dbReference type="GO" id="GO:0007625">
    <property type="term" value="P:grooming behavior"/>
    <property type="evidence" value="ECO:0000266"/>
    <property type="project" value="RGD"/>
</dbReference>
<dbReference type="GO" id="GO:0045638">
    <property type="term" value="P:negative regulation of myeloid cell differentiation"/>
    <property type="evidence" value="ECO:0000250"/>
    <property type="project" value="UniProtKB"/>
</dbReference>
<dbReference type="GO" id="GO:0000122">
    <property type="term" value="P:negative regulation of transcription by RNA polymerase II"/>
    <property type="evidence" value="ECO:0000266"/>
    <property type="project" value="RGD"/>
</dbReference>
<dbReference type="GO" id="GO:0019233">
    <property type="term" value="P:sensory perception of pain"/>
    <property type="evidence" value="ECO:0000266"/>
    <property type="project" value="RGD"/>
</dbReference>
<dbReference type="GO" id="GO:0048705">
    <property type="term" value="P:skeletal system morphogenesis"/>
    <property type="evidence" value="ECO:0000266"/>
    <property type="project" value="RGD"/>
</dbReference>
<dbReference type="CDD" id="cd00086">
    <property type="entry name" value="homeodomain"/>
    <property type="match status" value="1"/>
</dbReference>
<dbReference type="FunFam" id="1.10.10.60:FF:000762">
    <property type="entry name" value="Homeobox protein Hox-B8"/>
    <property type="match status" value="1"/>
</dbReference>
<dbReference type="Gene3D" id="1.10.10.60">
    <property type="entry name" value="Homeodomain-like"/>
    <property type="match status" value="1"/>
</dbReference>
<dbReference type="InterPro" id="IPR050948">
    <property type="entry name" value="Antp_homeobox_TF"/>
</dbReference>
<dbReference type="InterPro" id="IPR001356">
    <property type="entry name" value="HD"/>
</dbReference>
<dbReference type="InterPro" id="IPR020479">
    <property type="entry name" value="HD_metazoa"/>
</dbReference>
<dbReference type="InterPro" id="IPR017970">
    <property type="entry name" value="Homeobox_CS"/>
</dbReference>
<dbReference type="InterPro" id="IPR009057">
    <property type="entry name" value="Homeodomain-like_sf"/>
</dbReference>
<dbReference type="InterPro" id="IPR000047">
    <property type="entry name" value="HTH_motif"/>
</dbReference>
<dbReference type="PANTHER" id="PTHR46166">
    <property type="entry name" value="HOMEOBOX DOMAIN-CONTAINING PROTEIN"/>
    <property type="match status" value="1"/>
</dbReference>
<dbReference type="PANTHER" id="PTHR46166:SF2">
    <property type="entry name" value="HOMEOBOX PROTEIN HOX-B8"/>
    <property type="match status" value="1"/>
</dbReference>
<dbReference type="Pfam" id="PF00046">
    <property type="entry name" value="Homeodomain"/>
    <property type="match status" value="1"/>
</dbReference>
<dbReference type="PRINTS" id="PR00024">
    <property type="entry name" value="HOMEOBOX"/>
</dbReference>
<dbReference type="PRINTS" id="PR00031">
    <property type="entry name" value="HTHREPRESSR"/>
</dbReference>
<dbReference type="SMART" id="SM00389">
    <property type="entry name" value="HOX"/>
    <property type="match status" value="1"/>
</dbReference>
<dbReference type="SUPFAM" id="SSF46689">
    <property type="entry name" value="Homeodomain-like"/>
    <property type="match status" value="1"/>
</dbReference>
<dbReference type="PROSITE" id="PS00027">
    <property type="entry name" value="HOMEOBOX_1"/>
    <property type="match status" value="1"/>
</dbReference>
<dbReference type="PROSITE" id="PS50071">
    <property type="entry name" value="HOMEOBOX_2"/>
    <property type="match status" value="1"/>
</dbReference>
<protein>
    <recommendedName>
        <fullName>Homeobox protein Hox-B8</fullName>
    </recommendedName>
    <alternativeName>
        <fullName>Homeobox protein R1A</fullName>
    </alternativeName>
</protein>
<gene>
    <name type="primary">Hoxb8</name>
    <name type="synonym">Hoxb-8</name>
</gene>
<keyword id="KW-0217">Developmental protein</keyword>
<keyword id="KW-0238">DNA-binding</keyword>
<keyword id="KW-0371">Homeobox</keyword>
<keyword id="KW-0539">Nucleus</keyword>
<keyword id="KW-1185">Reference proteome</keyword>
<keyword id="KW-0804">Transcription</keyword>
<keyword id="KW-0805">Transcription regulation</keyword>
<proteinExistence type="evidence at transcript level"/>
<accession>P18863</accession>
<comment type="function">
    <text>Sequence-specific transcription factor which is part of a developmental regulatory system that provides cells with specific positional identities on the anterior-posterior axis.</text>
</comment>
<comment type="subunit">
    <text evidence="1">Forms a DNA-binding heterodimer with transcription factor PBX1.</text>
</comment>
<comment type="subcellular location">
    <subcellularLocation>
        <location>Nucleus</location>
    </subcellularLocation>
</comment>
<comment type="tissue specificity">
    <text>Predominantly spinal cord and kidney.</text>
</comment>
<comment type="similarity">
    <text evidence="4">Belongs to the Antp homeobox family.</text>
</comment>
<sequence length="92" mass="11358">VLSPIPSSRRTQRGRQTYSRYQTLELEKEFLFNPYLTRKRRIEVSHALGLTERQVKIWFQNRRMKWKKENNKDKFPSSKCEQEELEKEKLER</sequence>